<proteinExistence type="evidence at protein level"/>
<dbReference type="GO" id="GO:0005576">
    <property type="term" value="C:extracellular region"/>
    <property type="evidence" value="ECO:0007669"/>
    <property type="project" value="UniProtKB-SubCell"/>
</dbReference>
<dbReference type="GO" id="GO:0050832">
    <property type="term" value="P:defense response to fungus"/>
    <property type="evidence" value="ECO:0007669"/>
    <property type="project" value="UniProtKB-KW"/>
</dbReference>
<dbReference type="GO" id="GO:0050829">
    <property type="term" value="P:defense response to Gram-negative bacterium"/>
    <property type="evidence" value="ECO:0007669"/>
    <property type="project" value="UniProtKB-ARBA"/>
</dbReference>
<dbReference type="GO" id="GO:0031640">
    <property type="term" value="P:killing of cells of another organism"/>
    <property type="evidence" value="ECO:0007669"/>
    <property type="project" value="UniProtKB-KW"/>
</dbReference>
<dbReference type="InterPro" id="IPR012521">
    <property type="entry name" value="Antimicrobial_frog_2"/>
</dbReference>
<dbReference type="Pfam" id="PF08023">
    <property type="entry name" value="Antimicrobial_2"/>
    <property type="match status" value="1"/>
</dbReference>
<name>RN1_LITCL</name>
<feature type="peptide" id="PRO_0000043567" description="Ranatuerin-1C" evidence="1">
    <location>
        <begin position="1"/>
        <end position="25"/>
    </location>
</feature>
<feature type="disulfide bond" evidence="1">
    <location>
        <begin position="19"/>
        <end position="25"/>
    </location>
</feature>
<sequence>SMLSVLKNLGKVGLGLVACKINKQC</sequence>
<accession>P82875</accession>
<keyword id="KW-0878">Amphibian defense peptide</keyword>
<keyword id="KW-0044">Antibiotic</keyword>
<keyword id="KW-0929">Antimicrobial</keyword>
<keyword id="KW-0903">Direct protein sequencing</keyword>
<keyword id="KW-1015">Disulfide bond</keyword>
<keyword id="KW-0295">Fungicide</keyword>
<keyword id="KW-0964">Secreted</keyword>
<reference key="1">
    <citation type="journal article" date="2000" name="Peptides">
        <title>Purification and characterization of antimicrobial peptides from the skin of the North American green frog Rana clamitans.</title>
        <authorList>
            <person name="Halverson T."/>
            <person name="Basir Y.J."/>
            <person name="Knoop F.C."/>
            <person name="Conlon J.M."/>
        </authorList>
    </citation>
    <scope>PROTEIN SEQUENCE</scope>
    <scope>FUNCTION</scope>
    <scope>MASS SPECTROMETRY</scope>
    <scope>SUBCELLULAR LOCATION</scope>
    <source>
        <tissue>Skin secretion</tissue>
    </source>
</reference>
<comment type="function">
    <text evidence="1">Antibacterial activity against Gram-positive bacterium S.aureus (MIC=55 uM) and Gram-negative bacterium E.coli (MIC=1.5 uM). Has activity against C.albicans (MIC=58 uM).</text>
</comment>
<comment type="subcellular location">
    <subcellularLocation>
        <location evidence="1">Secreted</location>
    </subcellularLocation>
</comment>
<comment type="tissue specificity">
    <text evidence="4">Expressed by the skin glands.</text>
</comment>
<comment type="mass spectrometry"/>
<comment type="similarity">
    <text evidence="3">Belongs to the frog skin active peptide (FSAP) family. Ranatuerin subfamily.</text>
</comment>
<organism>
    <name type="scientific">Lithobates clamitans</name>
    <name type="common">Green frog</name>
    <name type="synonym">Rana clamitans</name>
    <dbReference type="NCBI Taxonomy" id="145282"/>
    <lineage>
        <taxon>Eukaryota</taxon>
        <taxon>Metazoa</taxon>
        <taxon>Chordata</taxon>
        <taxon>Craniata</taxon>
        <taxon>Vertebrata</taxon>
        <taxon>Euteleostomi</taxon>
        <taxon>Amphibia</taxon>
        <taxon>Batrachia</taxon>
        <taxon>Anura</taxon>
        <taxon>Neobatrachia</taxon>
        <taxon>Ranoidea</taxon>
        <taxon>Ranidae</taxon>
        <taxon>Lithobates</taxon>
    </lineage>
</organism>
<protein>
    <recommendedName>
        <fullName evidence="2">Ranatuerin-1C</fullName>
    </recommendedName>
</protein>
<evidence type="ECO:0000269" key="1">
    <source>
    </source>
</evidence>
<evidence type="ECO:0000303" key="2">
    <source>
    </source>
</evidence>
<evidence type="ECO:0000305" key="3"/>
<evidence type="ECO:0000305" key="4">
    <source>
    </source>
</evidence>